<name>URE1_MYCUA</name>
<evidence type="ECO:0000255" key="1">
    <source>
        <dbReference type="HAMAP-Rule" id="MF_01953"/>
    </source>
</evidence>
<dbReference type="EC" id="3.5.1.5" evidence="1"/>
<dbReference type="EMBL" id="CP000325">
    <property type="protein sequence ID" value="ABL05281.1"/>
    <property type="molecule type" value="Genomic_DNA"/>
</dbReference>
<dbReference type="RefSeq" id="WP_011740893.1">
    <property type="nucleotide sequence ID" value="NC_008611.1"/>
</dbReference>
<dbReference type="SMR" id="A0PSG2"/>
<dbReference type="MEROPS" id="M38.982"/>
<dbReference type="KEGG" id="mul:MUL_3029"/>
<dbReference type="eggNOG" id="COG0804">
    <property type="taxonomic scope" value="Bacteria"/>
</dbReference>
<dbReference type="HOGENOM" id="CLU_000980_0_0_11"/>
<dbReference type="UniPathway" id="UPA00258">
    <property type="reaction ID" value="UER00370"/>
</dbReference>
<dbReference type="Proteomes" id="UP000000765">
    <property type="component" value="Chromosome"/>
</dbReference>
<dbReference type="GO" id="GO:0005737">
    <property type="term" value="C:cytoplasm"/>
    <property type="evidence" value="ECO:0007669"/>
    <property type="project" value="UniProtKB-SubCell"/>
</dbReference>
<dbReference type="GO" id="GO:0016151">
    <property type="term" value="F:nickel cation binding"/>
    <property type="evidence" value="ECO:0007669"/>
    <property type="project" value="UniProtKB-UniRule"/>
</dbReference>
<dbReference type="GO" id="GO:0009039">
    <property type="term" value="F:urease activity"/>
    <property type="evidence" value="ECO:0007669"/>
    <property type="project" value="UniProtKB-UniRule"/>
</dbReference>
<dbReference type="GO" id="GO:0043419">
    <property type="term" value="P:urea catabolic process"/>
    <property type="evidence" value="ECO:0007669"/>
    <property type="project" value="UniProtKB-UniRule"/>
</dbReference>
<dbReference type="CDD" id="cd00375">
    <property type="entry name" value="Urease_alpha"/>
    <property type="match status" value="1"/>
</dbReference>
<dbReference type="Gene3D" id="3.20.20.140">
    <property type="entry name" value="Metal-dependent hydrolases"/>
    <property type="match status" value="1"/>
</dbReference>
<dbReference type="Gene3D" id="2.30.40.10">
    <property type="entry name" value="Urease, subunit C, domain 1"/>
    <property type="match status" value="1"/>
</dbReference>
<dbReference type="HAMAP" id="MF_01953">
    <property type="entry name" value="Urease_alpha"/>
    <property type="match status" value="1"/>
</dbReference>
<dbReference type="InterPro" id="IPR006680">
    <property type="entry name" value="Amidohydro-rel"/>
</dbReference>
<dbReference type="InterPro" id="IPR011059">
    <property type="entry name" value="Metal-dep_hydrolase_composite"/>
</dbReference>
<dbReference type="InterPro" id="IPR032466">
    <property type="entry name" value="Metal_Hydrolase"/>
</dbReference>
<dbReference type="InterPro" id="IPR011612">
    <property type="entry name" value="Urease_alpha_N_dom"/>
</dbReference>
<dbReference type="InterPro" id="IPR050112">
    <property type="entry name" value="Urease_alpha_subunit"/>
</dbReference>
<dbReference type="InterPro" id="IPR017950">
    <property type="entry name" value="Urease_AS"/>
</dbReference>
<dbReference type="InterPro" id="IPR005848">
    <property type="entry name" value="Urease_asu"/>
</dbReference>
<dbReference type="InterPro" id="IPR017951">
    <property type="entry name" value="Urease_asu_c"/>
</dbReference>
<dbReference type="InterPro" id="IPR029754">
    <property type="entry name" value="Urease_Ni-bd"/>
</dbReference>
<dbReference type="NCBIfam" id="NF009685">
    <property type="entry name" value="PRK13206.1"/>
    <property type="match status" value="1"/>
</dbReference>
<dbReference type="NCBIfam" id="NF009686">
    <property type="entry name" value="PRK13207.1"/>
    <property type="match status" value="1"/>
</dbReference>
<dbReference type="NCBIfam" id="TIGR01792">
    <property type="entry name" value="urease_alph"/>
    <property type="match status" value="1"/>
</dbReference>
<dbReference type="PANTHER" id="PTHR43440">
    <property type="entry name" value="UREASE"/>
    <property type="match status" value="1"/>
</dbReference>
<dbReference type="PANTHER" id="PTHR43440:SF1">
    <property type="entry name" value="UREASE"/>
    <property type="match status" value="1"/>
</dbReference>
<dbReference type="Pfam" id="PF01979">
    <property type="entry name" value="Amidohydro_1"/>
    <property type="match status" value="1"/>
</dbReference>
<dbReference type="Pfam" id="PF00449">
    <property type="entry name" value="Urease_alpha"/>
    <property type="match status" value="1"/>
</dbReference>
<dbReference type="PRINTS" id="PR01752">
    <property type="entry name" value="UREASE"/>
</dbReference>
<dbReference type="SUPFAM" id="SSF51338">
    <property type="entry name" value="Composite domain of metallo-dependent hydrolases"/>
    <property type="match status" value="2"/>
</dbReference>
<dbReference type="SUPFAM" id="SSF51556">
    <property type="entry name" value="Metallo-dependent hydrolases"/>
    <property type="match status" value="1"/>
</dbReference>
<dbReference type="PROSITE" id="PS01120">
    <property type="entry name" value="UREASE_1"/>
    <property type="match status" value="1"/>
</dbReference>
<dbReference type="PROSITE" id="PS00145">
    <property type="entry name" value="UREASE_2"/>
    <property type="match status" value="1"/>
</dbReference>
<dbReference type="PROSITE" id="PS51368">
    <property type="entry name" value="UREASE_3"/>
    <property type="match status" value="1"/>
</dbReference>
<sequence length="577" mass="60865">MARLSRERYAQLYGPTTGDRIRLADTDLLVEITEDRCGGPGLAGDEAVFGGGKVLRESMGQGRVTRAEGAPDTVITGAVIIDYWGIIKANIGIRDGRIVAIGKAGNPNIMSGIHPDLVVGPSTEIIGGNGRIVTAGAIDCHVHLICPQVIAEALSSGITTIIGGGTGPAEGSKSTTVTPGGWHLARMLEALDSWPVNIALLGKGNTVNPDALWEQLRGGASGFKLHEDWGKSPAAIDACLTVADAAGVQVALHSDTLNEMGFVEDTLAAIAGRSIHTYHTEGAGGGHAPDIITVAAHPNVLPSSTNPTRPHTVNALDEHLDMLMVCHHLNPRIPDDLAFAESRIRPSTIAAEDLLHDIGAISMIGSDSQAMGRVGEVVMRTWQTAHVMKQRRGALEGDPSGRYSADNNRARRYVAKYTICPAVAHGLDHEVGSVEVGKLADLVLWEPAFFGVRPHAVVKGGAIAWAAMGDANASIPTPQPVLPRPMFGASPAVAAATSVHFVAAQSIEAGLADQIAVDRRLVPVADVRAVGKADMPLNDAQPRIEVDPDTFTVRIDGEVWEQQPATELPMAQRYFLF</sequence>
<feature type="chain" id="PRO_1000070674" description="Urease subunit alpha">
    <location>
        <begin position="1"/>
        <end position="577"/>
    </location>
</feature>
<feature type="domain" description="Urease" evidence="1">
    <location>
        <begin position="136"/>
        <end position="577"/>
    </location>
</feature>
<feature type="active site" description="Proton donor" evidence="1">
    <location>
        <position position="327"/>
    </location>
</feature>
<feature type="binding site" evidence="1">
    <location>
        <position position="141"/>
    </location>
    <ligand>
        <name>Ni(2+)</name>
        <dbReference type="ChEBI" id="CHEBI:49786"/>
        <label>1</label>
    </ligand>
</feature>
<feature type="binding site" evidence="1">
    <location>
        <position position="143"/>
    </location>
    <ligand>
        <name>Ni(2+)</name>
        <dbReference type="ChEBI" id="CHEBI:49786"/>
        <label>1</label>
    </ligand>
</feature>
<feature type="binding site" description="via carbamate group" evidence="1">
    <location>
        <position position="224"/>
    </location>
    <ligand>
        <name>Ni(2+)</name>
        <dbReference type="ChEBI" id="CHEBI:49786"/>
        <label>1</label>
    </ligand>
</feature>
<feature type="binding site" description="via carbamate group" evidence="1">
    <location>
        <position position="224"/>
    </location>
    <ligand>
        <name>Ni(2+)</name>
        <dbReference type="ChEBI" id="CHEBI:49786"/>
        <label>2</label>
    </ligand>
</feature>
<feature type="binding site" evidence="1">
    <location>
        <position position="226"/>
    </location>
    <ligand>
        <name>substrate</name>
    </ligand>
</feature>
<feature type="binding site" evidence="1">
    <location>
        <position position="253"/>
    </location>
    <ligand>
        <name>Ni(2+)</name>
        <dbReference type="ChEBI" id="CHEBI:49786"/>
        <label>2</label>
    </ligand>
</feature>
<feature type="binding site" evidence="1">
    <location>
        <position position="279"/>
    </location>
    <ligand>
        <name>Ni(2+)</name>
        <dbReference type="ChEBI" id="CHEBI:49786"/>
        <label>2</label>
    </ligand>
</feature>
<feature type="binding site" evidence="1">
    <location>
        <position position="367"/>
    </location>
    <ligand>
        <name>Ni(2+)</name>
        <dbReference type="ChEBI" id="CHEBI:49786"/>
        <label>1</label>
    </ligand>
</feature>
<feature type="modified residue" description="N6-carboxylysine" evidence="1">
    <location>
        <position position="224"/>
    </location>
</feature>
<organism>
    <name type="scientific">Mycobacterium ulcerans (strain Agy99)</name>
    <dbReference type="NCBI Taxonomy" id="362242"/>
    <lineage>
        <taxon>Bacteria</taxon>
        <taxon>Bacillati</taxon>
        <taxon>Actinomycetota</taxon>
        <taxon>Actinomycetes</taxon>
        <taxon>Mycobacteriales</taxon>
        <taxon>Mycobacteriaceae</taxon>
        <taxon>Mycobacterium</taxon>
        <taxon>Mycobacterium ulcerans group</taxon>
    </lineage>
</organism>
<comment type="catalytic activity">
    <reaction evidence="1">
        <text>urea + 2 H2O + H(+) = hydrogencarbonate + 2 NH4(+)</text>
        <dbReference type="Rhea" id="RHEA:20557"/>
        <dbReference type="ChEBI" id="CHEBI:15377"/>
        <dbReference type="ChEBI" id="CHEBI:15378"/>
        <dbReference type="ChEBI" id="CHEBI:16199"/>
        <dbReference type="ChEBI" id="CHEBI:17544"/>
        <dbReference type="ChEBI" id="CHEBI:28938"/>
        <dbReference type="EC" id="3.5.1.5"/>
    </reaction>
</comment>
<comment type="cofactor">
    <cofactor evidence="1">
        <name>Ni cation</name>
        <dbReference type="ChEBI" id="CHEBI:25516"/>
    </cofactor>
    <text evidence="1">Binds 2 nickel ions per subunit.</text>
</comment>
<comment type="pathway">
    <text evidence="1">Nitrogen metabolism; urea degradation; CO(2) and NH(3) from urea (urease route): step 1/1.</text>
</comment>
<comment type="subunit">
    <text evidence="1">Heterotrimer of UreA (gamma), UreB (beta) and UreC (alpha) subunits. Three heterotrimers associate to form the active enzyme.</text>
</comment>
<comment type="subcellular location">
    <subcellularLocation>
        <location evidence="1">Cytoplasm</location>
    </subcellularLocation>
</comment>
<comment type="PTM">
    <text evidence="1">Carboxylation allows a single lysine to coordinate two nickel ions.</text>
</comment>
<comment type="similarity">
    <text evidence="1">Belongs to the metallo-dependent hydrolases superfamily. Urease alpha subunit family.</text>
</comment>
<reference key="1">
    <citation type="journal article" date="2007" name="Genome Res.">
        <title>Reductive evolution and niche adaptation inferred from the genome of Mycobacterium ulcerans, the causative agent of Buruli ulcer.</title>
        <authorList>
            <person name="Stinear T.P."/>
            <person name="Seemann T."/>
            <person name="Pidot S."/>
            <person name="Frigui W."/>
            <person name="Reysset G."/>
            <person name="Garnier T."/>
            <person name="Meurice G."/>
            <person name="Simon D."/>
            <person name="Bouchier C."/>
            <person name="Ma L."/>
            <person name="Tichit M."/>
            <person name="Porter J.L."/>
            <person name="Ryan J."/>
            <person name="Johnson P.D.R."/>
            <person name="Davies J.K."/>
            <person name="Jenkin G.A."/>
            <person name="Small P.L.C."/>
            <person name="Jones L.M."/>
            <person name="Tekaia F."/>
            <person name="Laval F."/>
            <person name="Daffe M."/>
            <person name="Parkhill J."/>
            <person name="Cole S.T."/>
        </authorList>
    </citation>
    <scope>NUCLEOTIDE SEQUENCE [LARGE SCALE GENOMIC DNA]</scope>
    <source>
        <strain>Agy99</strain>
    </source>
</reference>
<gene>
    <name evidence="1" type="primary">ureC</name>
    <name type="ordered locus">MUL_3029</name>
</gene>
<keyword id="KW-0963">Cytoplasm</keyword>
<keyword id="KW-0378">Hydrolase</keyword>
<keyword id="KW-0479">Metal-binding</keyword>
<keyword id="KW-0533">Nickel</keyword>
<accession>A0PSG2</accession>
<protein>
    <recommendedName>
        <fullName evidence="1">Urease subunit alpha</fullName>
        <ecNumber evidence="1">3.5.1.5</ecNumber>
    </recommendedName>
    <alternativeName>
        <fullName evidence="1">Urea amidohydrolase subunit alpha</fullName>
    </alternativeName>
</protein>
<proteinExistence type="inferred from homology"/>